<sequence>MATLFIADLHLCAEEPAITAGFLRFLAGEARKADALYILGDLFEAWIGDDDPNPLHHQMAAAIKAVSDSGVPCYFIHGNRDFLLGKRFARESGMTLLPEEKVLELYGRRVLIMHGDTLCTDDAGYQAFRAKVHKPWLQTLFLALPLFVRKRIAARMRANSKEANSSKSLAIMDVNQNAVVSAMEKHQVQWLIHGHTHRPAVHELIANQQTAFRVVLGAWHTEGSMVKVTADDVELIHFPF</sequence>
<dbReference type="EC" id="3.6.1.54" evidence="1"/>
<dbReference type="EMBL" id="AE014075">
    <property type="protein sequence ID" value="AAN79116.1"/>
    <property type="molecule type" value="Genomic_DNA"/>
</dbReference>
<dbReference type="RefSeq" id="WP_000212234.1">
    <property type="nucleotide sequence ID" value="NZ_CP051263.1"/>
</dbReference>
<dbReference type="PDB" id="8S7F">
    <property type="method" value="X-ray"/>
    <property type="resolution" value="1.60 A"/>
    <property type="chains" value="A=1-240"/>
</dbReference>
<dbReference type="PDBsum" id="8S7F"/>
<dbReference type="SMR" id="Q8FK47"/>
<dbReference type="STRING" id="199310.c0639"/>
<dbReference type="KEGG" id="ecc:c0639"/>
<dbReference type="eggNOG" id="COG2908">
    <property type="taxonomic scope" value="Bacteria"/>
</dbReference>
<dbReference type="HOGENOM" id="CLU_074586_0_0_6"/>
<dbReference type="BioCyc" id="ECOL199310:C0639-MONOMER"/>
<dbReference type="UniPathway" id="UPA00359">
    <property type="reaction ID" value="UER00480"/>
</dbReference>
<dbReference type="Proteomes" id="UP000001410">
    <property type="component" value="Chromosome"/>
</dbReference>
<dbReference type="GO" id="GO:0005737">
    <property type="term" value="C:cytoplasm"/>
    <property type="evidence" value="ECO:0007669"/>
    <property type="project" value="InterPro"/>
</dbReference>
<dbReference type="GO" id="GO:0019897">
    <property type="term" value="C:extrinsic component of plasma membrane"/>
    <property type="evidence" value="ECO:0007669"/>
    <property type="project" value="UniProtKB-UniRule"/>
</dbReference>
<dbReference type="GO" id="GO:0030145">
    <property type="term" value="F:manganese ion binding"/>
    <property type="evidence" value="ECO:0007669"/>
    <property type="project" value="UniProtKB-UniRule"/>
</dbReference>
<dbReference type="GO" id="GO:0008758">
    <property type="term" value="F:UDP-2,3-diacylglucosamine hydrolase activity"/>
    <property type="evidence" value="ECO:0007669"/>
    <property type="project" value="UniProtKB-UniRule"/>
</dbReference>
<dbReference type="GO" id="GO:0009245">
    <property type="term" value="P:lipid A biosynthetic process"/>
    <property type="evidence" value="ECO:0007669"/>
    <property type="project" value="UniProtKB-UniRule"/>
</dbReference>
<dbReference type="CDD" id="cd07398">
    <property type="entry name" value="MPP_YbbF-LpxH"/>
    <property type="match status" value="1"/>
</dbReference>
<dbReference type="FunFam" id="3.60.21.10:FF:000012">
    <property type="entry name" value="UDP-2,3-diacylglucosamine hydrolase"/>
    <property type="match status" value="1"/>
</dbReference>
<dbReference type="Gene3D" id="3.60.21.10">
    <property type="match status" value="1"/>
</dbReference>
<dbReference type="HAMAP" id="MF_00575">
    <property type="entry name" value="LpxH"/>
    <property type="match status" value="1"/>
</dbReference>
<dbReference type="InterPro" id="IPR004843">
    <property type="entry name" value="Calcineurin-like_PHP_ApaH"/>
</dbReference>
<dbReference type="InterPro" id="IPR043461">
    <property type="entry name" value="LpxH-like"/>
</dbReference>
<dbReference type="InterPro" id="IPR029052">
    <property type="entry name" value="Metallo-depent_PP-like"/>
</dbReference>
<dbReference type="InterPro" id="IPR010138">
    <property type="entry name" value="UDP-diacylglucosamine_Hdrlase"/>
</dbReference>
<dbReference type="NCBIfam" id="TIGR01854">
    <property type="entry name" value="lipid_A_lpxH"/>
    <property type="match status" value="1"/>
</dbReference>
<dbReference type="NCBIfam" id="NF003743">
    <property type="entry name" value="PRK05340.1"/>
    <property type="match status" value="1"/>
</dbReference>
<dbReference type="PANTHER" id="PTHR34990:SF1">
    <property type="entry name" value="UDP-2,3-DIACYLGLUCOSAMINE HYDROLASE"/>
    <property type="match status" value="1"/>
</dbReference>
<dbReference type="PANTHER" id="PTHR34990">
    <property type="entry name" value="UDP-2,3-DIACYLGLUCOSAMINE HYDROLASE-RELATED"/>
    <property type="match status" value="1"/>
</dbReference>
<dbReference type="Pfam" id="PF00149">
    <property type="entry name" value="Metallophos"/>
    <property type="match status" value="1"/>
</dbReference>
<dbReference type="SUPFAM" id="SSF56300">
    <property type="entry name" value="Metallo-dependent phosphatases"/>
    <property type="match status" value="1"/>
</dbReference>
<evidence type="ECO:0000255" key="1">
    <source>
        <dbReference type="HAMAP-Rule" id="MF_00575"/>
    </source>
</evidence>
<proteinExistence type="evidence at protein level"/>
<keyword id="KW-0002">3D-structure</keyword>
<keyword id="KW-0997">Cell inner membrane</keyword>
<keyword id="KW-1003">Cell membrane</keyword>
<keyword id="KW-0378">Hydrolase</keyword>
<keyword id="KW-0441">Lipid A biosynthesis</keyword>
<keyword id="KW-0444">Lipid biosynthesis</keyword>
<keyword id="KW-0443">Lipid metabolism</keyword>
<keyword id="KW-0464">Manganese</keyword>
<keyword id="KW-0472">Membrane</keyword>
<keyword id="KW-0479">Metal-binding</keyword>
<keyword id="KW-1185">Reference proteome</keyword>
<gene>
    <name evidence="1" type="primary">lpxH</name>
    <name type="ordered locus">c0639</name>
</gene>
<name>LPXH_ECOL6</name>
<comment type="function">
    <text evidence="1">Hydrolyzes the pyrophosphate bond of UDP-2,3-diacylglucosamine to yield 2,3-diacylglucosamine 1-phosphate (lipid X) and UMP by catalyzing the attack of water at the alpha-P atom. Involved in the biosynthesis of lipid A, a phosphorylated glycolipid that anchors the lipopolysaccharide to the outer membrane of the cell.</text>
</comment>
<comment type="catalytic activity">
    <reaction evidence="1">
        <text>UDP-2-N,3-O-bis[(3R)-3-hydroxytetradecanoyl]-alpha-D-glucosamine + H2O = 2-N,3-O-bis[(3R)-3-hydroxytetradecanoyl]-alpha-D-glucosaminyl 1-phosphate + UMP + 2 H(+)</text>
        <dbReference type="Rhea" id="RHEA:25213"/>
        <dbReference type="ChEBI" id="CHEBI:15377"/>
        <dbReference type="ChEBI" id="CHEBI:15378"/>
        <dbReference type="ChEBI" id="CHEBI:57865"/>
        <dbReference type="ChEBI" id="CHEBI:57957"/>
        <dbReference type="ChEBI" id="CHEBI:78847"/>
        <dbReference type="EC" id="3.6.1.54"/>
    </reaction>
</comment>
<comment type="cofactor">
    <cofactor evidence="1">
        <name>Mn(2+)</name>
        <dbReference type="ChEBI" id="CHEBI:29035"/>
    </cofactor>
    <text evidence="1">Binds 2 Mn(2+) ions per subunit in a binuclear metal center.</text>
</comment>
<comment type="pathway">
    <text evidence="1">Glycolipid biosynthesis; lipid IV(A) biosynthesis; lipid IV(A) from (3R)-3-hydroxytetradecanoyl-[acyl-carrier-protein] and UDP-N-acetyl-alpha-D-glucosamine: step 4/6.</text>
</comment>
<comment type="subcellular location">
    <subcellularLocation>
        <location evidence="1">Cell inner membrane</location>
        <topology evidence="1">Peripheral membrane protein</topology>
        <orientation evidence="1">Cytoplasmic side</orientation>
    </subcellularLocation>
</comment>
<comment type="similarity">
    <text evidence="1">Belongs to the LpxH family.</text>
</comment>
<feature type="chain" id="PRO_0000214109" description="UDP-2,3-diacylglucosamine hydrolase">
    <location>
        <begin position="1"/>
        <end position="240"/>
    </location>
</feature>
<feature type="binding site" evidence="1">
    <location>
        <position position="8"/>
    </location>
    <ligand>
        <name>Mn(2+)</name>
        <dbReference type="ChEBI" id="CHEBI:29035"/>
        <label>1</label>
    </ligand>
</feature>
<feature type="binding site" evidence="1">
    <location>
        <position position="10"/>
    </location>
    <ligand>
        <name>Mn(2+)</name>
        <dbReference type="ChEBI" id="CHEBI:29035"/>
        <label>1</label>
    </ligand>
</feature>
<feature type="binding site" evidence="1">
    <location>
        <position position="41"/>
    </location>
    <ligand>
        <name>Mn(2+)</name>
        <dbReference type="ChEBI" id="CHEBI:29035"/>
        <label>1</label>
    </ligand>
</feature>
<feature type="binding site" evidence="1">
    <location>
        <position position="41"/>
    </location>
    <ligand>
        <name>Mn(2+)</name>
        <dbReference type="ChEBI" id="CHEBI:29035"/>
        <label>2</label>
    </ligand>
</feature>
<feature type="binding site" evidence="1">
    <location>
        <begin position="79"/>
        <end position="80"/>
    </location>
    <ligand>
        <name>substrate</name>
    </ligand>
</feature>
<feature type="binding site" evidence="1">
    <location>
        <position position="79"/>
    </location>
    <ligand>
        <name>Mn(2+)</name>
        <dbReference type="ChEBI" id="CHEBI:29035"/>
        <label>2</label>
    </ligand>
</feature>
<feature type="binding site" evidence="1">
    <location>
        <position position="114"/>
    </location>
    <ligand>
        <name>Mn(2+)</name>
        <dbReference type="ChEBI" id="CHEBI:29035"/>
        <label>2</label>
    </ligand>
</feature>
<feature type="binding site" evidence="1">
    <location>
        <position position="122"/>
    </location>
    <ligand>
        <name>substrate</name>
    </ligand>
</feature>
<feature type="binding site" evidence="1">
    <location>
        <position position="160"/>
    </location>
    <ligand>
        <name>substrate</name>
    </ligand>
</feature>
<feature type="binding site" evidence="1">
    <location>
        <position position="164"/>
    </location>
    <ligand>
        <name>substrate</name>
    </ligand>
</feature>
<feature type="binding site" evidence="1">
    <location>
        <position position="167"/>
    </location>
    <ligand>
        <name>substrate</name>
    </ligand>
</feature>
<feature type="binding site" evidence="1">
    <location>
        <position position="195"/>
    </location>
    <ligand>
        <name>Mn(2+)</name>
        <dbReference type="ChEBI" id="CHEBI:29035"/>
        <label>2</label>
    </ligand>
</feature>
<feature type="binding site" evidence="1">
    <location>
        <position position="195"/>
    </location>
    <ligand>
        <name>substrate</name>
    </ligand>
</feature>
<feature type="binding site" evidence="1">
    <location>
        <position position="197"/>
    </location>
    <ligand>
        <name>Mn(2+)</name>
        <dbReference type="ChEBI" id="CHEBI:29035"/>
        <label>1</label>
    </ligand>
</feature>
<protein>
    <recommendedName>
        <fullName evidence="1">UDP-2,3-diacylglucosamine hydrolase</fullName>
        <ecNumber evidence="1">3.6.1.54</ecNumber>
    </recommendedName>
    <alternativeName>
        <fullName evidence="1">UDP-2,3-diacylglucosamine diphosphatase</fullName>
    </alternativeName>
</protein>
<accession>Q8FK47</accession>
<organism>
    <name type="scientific">Escherichia coli O6:H1 (strain CFT073 / ATCC 700928 / UPEC)</name>
    <dbReference type="NCBI Taxonomy" id="199310"/>
    <lineage>
        <taxon>Bacteria</taxon>
        <taxon>Pseudomonadati</taxon>
        <taxon>Pseudomonadota</taxon>
        <taxon>Gammaproteobacteria</taxon>
        <taxon>Enterobacterales</taxon>
        <taxon>Enterobacteriaceae</taxon>
        <taxon>Escherichia</taxon>
    </lineage>
</organism>
<reference key="1">
    <citation type="journal article" date="2002" name="Proc. Natl. Acad. Sci. U.S.A.">
        <title>Extensive mosaic structure revealed by the complete genome sequence of uropathogenic Escherichia coli.</title>
        <authorList>
            <person name="Welch R.A."/>
            <person name="Burland V."/>
            <person name="Plunkett G. III"/>
            <person name="Redford P."/>
            <person name="Roesch P."/>
            <person name="Rasko D."/>
            <person name="Buckles E.L."/>
            <person name="Liou S.-R."/>
            <person name="Boutin A."/>
            <person name="Hackett J."/>
            <person name="Stroud D."/>
            <person name="Mayhew G.F."/>
            <person name="Rose D.J."/>
            <person name="Zhou S."/>
            <person name="Schwartz D.C."/>
            <person name="Perna N.T."/>
            <person name="Mobley H.L.T."/>
            <person name="Donnenberg M.S."/>
            <person name="Blattner F.R."/>
        </authorList>
    </citation>
    <scope>NUCLEOTIDE SEQUENCE [LARGE SCALE GENOMIC DNA]</scope>
    <source>
        <strain>CFT073 / ATCC 700928 / UPEC</strain>
    </source>
</reference>